<gene>
    <name evidence="1" type="primary">rpmC</name>
    <name type="ordered locus">Dtpsy_0281</name>
</gene>
<feature type="chain" id="PRO_1000194013" description="Large ribosomal subunit protein uL29">
    <location>
        <begin position="1"/>
        <end position="65"/>
    </location>
</feature>
<dbReference type="EMBL" id="CP001392">
    <property type="protein sequence ID" value="ACM31765.1"/>
    <property type="molecule type" value="Genomic_DNA"/>
</dbReference>
<dbReference type="RefSeq" id="WP_011803750.1">
    <property type="nucleotide sequence ID" value="NC_011992.1"/>
</dbReference>
<dbReference type="SMR" id="B9MB81"/>
<dbReference type="GeneID" id="84683204"/>
<dbReference type="KEGG" id="dia:Dtpsy_0281"/>
<dbReference type="eggNOG" id="COG0255">
    <property type="taxonomic scope" value="Bacteria"/>
</dbReference>
<dbReference type="HOGENOM" id="CLU_158491_1_1_4"/>
<dbReference type="Proteomes" id="UP000000450">
    <property type="component" value="Chromosome"/>
</dbReference>
<dbReference type="GO" id="GO:1990904">
    <property type="term" value="C:ribonucleoprotein complex"/>
    <property type="evidence" value="ECO:0007669"/>
    <property type="project" value="UniProtKB-KW"/>
</dbReference>
<dbReference type="GO" id="GO:0005840">
    <property type="term" value="C:ribosome"/>
    <property type="evidence" value="ECO:0007669"/>
    <property type="project" value="UniProtKB-KW"/>
</dbReference>
<dbReference type="GO" id="GO:0003735">
    <property type="term" value="F:structural constituent of ribosome"/>
    <property type="evidence" value="ECO:0007669"/>
    <property type="project" value="InterPro"/>
</dbReference>
<dbReference type="GO" id="GO:0006412">
    <property type="term" value="P:translation"/>
    <property type="evidence" value="ECO:0007669"/>
    <property type="project" value="UniProtKB-UniRule"/>
</dbReference>
<dbReference type="CDD" id="cd00427">
    <property type="entry name" value="Ribosomal_L29_HIP"/>
    <property type="match status" value="1"/>
</dbReference>
<dbReference type="FunFam" id="1.10.287.310:FF:000001">
    <property type="entry name" value="50S ribosomal protein L29"/>
    <property type="match status" value="1"/>
</dbReference>
<dbReference type="Gene3D" id="1.10.287.310">
    <property type="match status" value="1"/>
</dbReference>
<dbReference type="HAMAP" id="MF_00374">
    <property type="entry name" value="Ribosomal_uL29"/>
    <property type="match status" value="1"/>
</dbReference>
<dbReference type="InterPro" id="IPR001854">
    <property type="entry name" value="Ribosomal_uL29"/>
</dbReference>
<dbReference type="InterPro" id="IPR018254">
    <property type="entry name" value="Ribosomal_uL29_CS"/>
</dbReference>
<dbReference type="InterPro" id="IPR036049">
    <property type="entry name" value="Ribosomal_uL29_sf"/>
</dbReference>
<dbReference type="NCBIfam" id="TIGR00012">
    <property type="entry name" value="L29"/>
    <property type="match status" value="1"/>
</dbReference>
<dbReference type="Pfam" id="PF00831">
    <property type="entry name" value="Ribosomal_L29"/>
    <property type="match status" value="1"/>
</dbReference>
<dbReference type="SUPFAM" id="SSF46561">
    <property type="entry name" value="Ribosomal protein L29 (L29p)"/>
    <property type="match status" value="1"/>
</dbReference>
<dbReference type="PROSITE" id="PS00579">
    <property type="entry name" value="RIBOSOMAL_L29"/>
    <property type="match status" value="1"/>
</dbReference>
<protein>
    <recommendedName>
        <fullName evidence="1">Large ribosomal subunit protein uL29</fullName>
    </recommendedName>
    <alternativeName>
        <fullName evidence="2">50S ribosomal protein L29</fullName>
    </alternativeName>
</protein>
<accession>B9MB81</accession>
<evidence type="ECO:0000255" key="1">
    <source>
        <dbReference type="HAMAP-Rule" id="MF_00374"/>
    </source>
</evidence>
<evidence type="ECO:0000305" key="2"/>
<organism>
    <name type="scientific">Acidovorax ebreus (strain TPSY)</name>
    <name type="common">Diaphorobacter sp. (strain TPSY)</name>
    <dbReference type="NCBI Taxonomy" id="535289"/>
    <lineage>
        <taxon>Bacteria</taxon>
        <taxon>Pseudomonadati</taxon>
        <taxon>Pseudomonadota</taxon>
        <taxon>Betaproteobacteria</taxon>
        <taxon>Burkholderiales</taxon>
        <taxon>Comamonadaceae</taxon>
        <taxon>Diaphorobacter</taxon>
    </lineage>
</organism>
<comment type="similarity">
    <text evidence="1">Belongs to the universal ribosomal protein uL29 family.</text>
</comment>
<reference key="1">
    <citation type="submission" date="2009-01" db="EMBL/GenBank/DDBJ databases">
        <title>Complete sequence of Diaphorobacter sp. TPSY.</title>
        <authorList>
            <consortium name="US DOE Joint Genome Institute"/>
            <person name="Lucas S."/>
            <person name="Copeland A."/>
            <person name="Lapidus A."/>
            <person name="Glavina del Rio T."/>
            <person name="Tice H."/>
            <person name="Bruce D."/>
            <person name="Goodwin L."/>
            <person name="Pitluck S."/>
            <person name="Chertkov O."/>
            <person name="Brettin T."/>
            <person name="Detter J.C."/>
            <person name="Han C."/>
            <person name="Larimer F."/>
            <person name="Land M."/>
            <person name="Hauser L."/>
            <person name="Kyrpides N."/>
            <person name="Mikhailova N."/>
            <person name="Coates J.D."/>
        </authorList>
    </citation>
    <scope>NUCLEOTIDE SEQUENCE [LARGE SCALE GENOMIC DNA]</scope>
    <source>
        <strain>TPSY</strain>
    </source>
</reference>
<name>RL29_ACIET</name>
<keyword id="KW-1185">Reference proteome</keyword>
<keyword id="KW-0687">Ribonucleoprotein</keyword>
<keyword id="KW-0689">Ribosomal protein</keyword>
<proteinExistence type="inferred from homology"/>
<sequence>MTKSAELRQKDVAGLEAEIKSLQKAHFGLRMQKATQQLGNTATLKATRRDIARAKTILAEKQAAK</sequence>